<accession>Q60T34</accession>
<accession>A8XY99</accession>
<keyword id="KW-0472">Membrane</keyword>
<keyword id="KW-1185">Reference proteome</keyword>
<keyword id="KW-0812">Transmembrane</keyword>
<keyword id="KW-1133">Transmembrane helix</keyword>
<comment type="subcellular location">
    <subcellularLocation>
        <location evidence="2">Membrane</location>
        <topology evidence="2">Multi-pass membrane protein</topology>
    </subcellularLocation>
</comment>
<comment type="similarity">
    <text evidence="4">Belongs to the nematode receptor-like protein sra family.</text>
</comment>
<comment type="sequence caution" evidence="4">
    <conflict type="erroneous gene model prediction">
        <sequence resource="EMBL-CDS" id="CAP37616"/>
    </conflict>
</comment>
<evidence type="ECO:0000250" key="1">
    <source>
        <dbReference type="UniProtKB" id="Q20410"/>
    </source>
</evidence>
<evidence type="ECO:0000255" key="2"/>
<evidence type="ECO:0000269" key="3">
    <source>
    </source>
</evidence>
<evidence type="ECO:0000305" key="4"/>
<reference key="1">
    <citation type="journal article" date="2003" name="PLoS Biol.">
        <title>The genome sequence of Caenorhabditis briggsae: a platform for comparative genomics.</title>
        <authorList>
            <person name="Stein L.D."/>
            <person name="Bao Z."/>
            <person name="Blasiar D."/>
            <person name="Blumenthal T."/>
            <person name="Brent M.R."/>
            <person name="Chen N."/>
            <person name="Chinwalla A."/>
            <person name="Clarke L."/>
            <person name="Clee C."/>
            <person name="Coghlan A."/>
            <person name="Coulson A."/>
            <person name="D'Eustachio P."/>
            <person name="Fitch D.H.A."/>
            <person name="Fulton L.A."/>
            <person name="Fulton R.E."/>
            <person name="Griffiths-Jones S."/>
            <person name="Harris T.W."/>
            <person name="Hillier L.W."/>
            <person name="Kamath R."/>
            <person name="Kuwabara P.E."/>
            <person name="Mardis E.R."/>
            <person name="Marra M.A."/>
            <person name="Miner T.L."/>
            <person name="Minx P."/>
            <person name="Mullikin J.C."/>
            <person name="Plumb R.W."/>
            <person name="Rogers J."/>
            <person name="Schein J.E."/>
            <person name="Sohrmann M."/>
            <person name="Spieth J."/>
            <person name="Stajich J.E."/>
            <person name="Wei C."/>
            <person name="Willey D."/>
            <person name="Wilson R.K."/>
            <person name="Durbin R.M."/>
            <person name="Waterston R.H."/>
        </authorList>
    </citation>
    <scope>NUCLEOTIDE SEQUENCE [LARGE SCALE GENOMIC DNA]</scope>
    <source>
        <strain evidence="3">AF16</strain>
    </source>
</reference>
<gene>
    <name evidence="1" type="primary">sra-12</name>
    <name type="ORF">CBG20641</name>
</gene>
<dbReference type="EMBL" id="HE600991">
    <property type="protein sequence ID" value="CAP37616.1"/>
    <property type="status" value="ALT_SEQ"/>
    <property type="molecule type" value="Genomic_DNA"/>
</dbReference>
<dbReference type="SMR" id="Q60T34"/>
<dbReference type="FunCoup" id="Q60T34">
    <property type="interactions" value="1"/>
</dbReference>
<dbReference type="STRING" id="6238.Q60T34"/>
<dbReference type="KEGG" id="cbr:CBG_20641"/>
<dbReference type="CTD" id="8573483"/>
<dbReference type="WormBase" id="CBG20641">
    <property type="protein sequence ID" value="CBP47964"/>
    <property type="gene ID" value="WBGene00039587"/>
    <property type="gene designation" value="Cbr-sra-12"/>
</dbReference>
<dbReference type="eggNOG" id="ENOG502TFXY">
    <property type="taxonomic scope" value="Eukaryota"/>
</dbReference>
<dbReference type="HOGENOM" id="CLU_048025_0_1_1"/>
<dbReference type="InParanoid" id="Q60T34"/>
<dbReference type="Proteomes" id="UP000008549">
    <property type="component" value="Unassembled WGS sequence"/>
</dbReference>
<dbReference type="GO" id="GO:0016020">
    <property type="term" value="C:membrane"/>
    <property type="evidence" value="ECO:0007669"/>
    <property type="project" value="UniProtKB-SubCell"/>
</dbReference>
<dbReference type="GO" id="GO:0004930">
    <property type="term" value="F:G protein-coupled receptor activity"/>
    <property type="evidence" value="ECO:0007669"/>
    <property type="project" value="InterPro"/>
</dbReference>
<dbReference type="GO" id="GO:0004984">
    <property type="term" value="F:olfactory receptor activity"/>
    <property type="evidence" value="ECO:0000318"/>
    <property type="project" value="GO_Central"/>
</dbReference>
<dbReference type="GO" id="GO:0050907">
    <property type="term" value="P:detection of chemical stimulus involved in sensory perception"/>
    <property type="evidence" value="ECO:0000318"/>
    <property type="project" value="GO_Central"/>
</dbReference>
<dbReference type="FunFam" id="1.20.1070.10:FF:000683">
    <property type="entry name" value="Serpentine receptor class alpha-12"/>
    <property type="match status" value="1"/>
</dbReference>
<dbReference type="Gene3D" id="1.20.1070.10">
    <property type="entry name" value="Rhodopsin 7-helix transmembrane proteins"/>
    <property type="match status" value="1"/>
</dbReference>
<dbReference type="InterPro" id="IPR000344">
    <property type="entry name" value="7TM_GPCR_serpentine_rcpt_Sra"/>
</dbReference>
<dbReference type="InterPro" id="IPR051080">
    <property type="entry name" value="Nematode_rcpt-like_serp_alpha"/>
</dbReference>
<dbReference type="PANTHER" id="PTHR31357">
    <property type="entry name" value="SERPENTINE RECEPTOR CLASS ALPHA-10"/>
    <property type="match status" value="1"/>
</dbReference>
<dbReference type="PANTHER" id="PTHR31357:SF13">
    <property type="entry name" value="SERPENTINE RECEPTOR CLASS ALPHA-12"/>
    <property type="match status" value="1"/>
</dbReference>
<dbReference type="Pfam" id="PF02117">
    <property type="entry name" value="7TM_GPCR_Sra"/>
    <property type="match status" value="1"/>
</dbReference>
<dbReference type="PRINTS" id="PR00697">
    <property type="entry name" value="TMPROTEINSRA"/>
</dbReference>
<dbReference type="SUPFAM" id="SSF81321">
    <property type="entry name" value="Family A G protein-coupled receptor-like"/>
    <property type="match status" value="1"/>
</dbReference>
<sequence length="326" mass="37033">MSCASEVQAQLFTHPVQIIYACVQTVLFLATIIGSLLAIVQLCKKTTIPDSTKVLLIGALFFANAHELAYFSSPFKVFKMNLFHTNTSCYPLASTLECIPTTTVLAMGISGNMLIQSALSIFRLLATIFPVCYSRMRALPGVVLLFMVLIPSFLSYSWIRSDIVLDDYQMFCSQWSANISSRANTYLEYCSYLTVAHIIINALIILRNRSVESKCRFDVQQRYLNSETLKTTQTICYLSIAQFLAMFLYSGGVLFMRKNQKNIPTLIYINVIVWVYAPPYACVSLAPLILFSLWNLKKQRQIRIQSITVQKETQEDHIRKLQLSWG</sequence>
<proteinExistence type="inferred from homology"/>
<organism>
    <name type="scientific">Caenorhabditis briggsae</name>
    <dbReference type="NCBI Taxonomy" id="6238"/>
    <lineage>
        <taxon>Eukaryota</taxon>
        <taxon>Metazoa</taxon>
        <taxon>Ecdysozoa</taxon>
        <taxon>Nematoda</taxon>
        <taxon>Chromadorea</taxon>
        <taxon>Rhabditida</taxon>
        <taxon>Rhabditina</taxon>
        <taxon>Rhabditomorpha</taxon>
        <taxon>Rhabditoidea</taxon>
        <taxon>Rhabditidae</taxon>
        <taxon>Peloderinae</taxon>
        <taxon>Caenorhabditis</taxon>
    </lineage>
</organism>
<feature type="chain" id="PRO_0000273260" description="Serpentine receptor class alpha-12">
    <location>
        <begin position="1"/>
        <end position="326"/>
    </location>
</feature>
<feature type="topological domain" description="Extracellular" evidence="2 4">
    <location>
        <begin position="1"/>
        <end position="17"/>
    </location>
</feature>
<feature type="transmembrane region" description="Helical; Name=1" evidence="2">
    <location>
        <begin position="18"/>
        <end position="38"/>
    </location>
</feature>
<feature type="topological domain" description="Cytoplasmic" evidence="2 4">
    <location>
        <begin position="39"/>
        <end position="54"/>
    </location>
</feature>
<feature type="transmembrane region" description="Helical; Name=2" evidence="2">
    <location>
        <begin position="55"/>
        <end position="75"/>
    </location>
</feature>
<feature type="topological domain" description="Extracellular" evidence="2">
    <location>
        <begin position="76"/>
        <end position="101"/>
    </location>
</feature>
<feature type="transmembrane region" description="Helical; Name=3" evidence="2">
    <location>
        <begin position="102"/>
        <end position="122"/>
    </location>
</feature>
<feature type="topological domain" description="Cytoplasmic" evidence="2">
    <location>
        <begin position="123"/>
        <end position="138"/>
    </location>
</feature>
<feature type="transmembrane region" description="Helical; Name=4" evidence="2">
    <location>
        <begin position="139"/>
        <end position="159"/>
    </location>
</feature>
<feature type="topological domain" description="Extracellular" evidence="2">
    <location>
        <begin position="160"/>
        <end position="185"/>
    </location>
</feature>
<feature type="transmembrane region" description="Helical; Name=5" evidence="2">
    <location>
        <begin position="186"/>
        <end position="206"/>
    </location>
</feature>
<feature type="topological domain" description="Cytoplasmic" evidence="2">
    <location>
        <begin position="207"/>
        <end position="234"/>
    </location>
</feature>
<feature type="transmembrane region" description="Helical; Name=6" evidence="2">
    <location>
        <begin position="235"/>
        <end position="255"/>
    </location>
</feature>
<feature type="topological domain" description="Extracellular" evidence="2">
    <location>
        <begin position="256"/>
        <end position="270"/>
    </location>
</feature>
<feature type="transmembrane region" description="Helical; Name=7" evidence="2">
    <location>
        <begin position="271"/>
        <end position="291"/>
    </location>
</feature>
<feature type="topological domain" description="Cytoplasmic" evidence="2">
    <location>
        <begin position="292"/>
        <end position="326"/>
    </location>
</feature>
<name>SRA12_CAEBR</name>
<protein>
    <recommendedName>
        <fullName>Serpentine receptor class alpha-12</fullName>
        <shortName>Protein sra-12</shortName>
    </recommendedName>
</protein>